<proteinExistence type="inferred from homology"/>
<organism>
    <name type="scientific">Salmonella paratyphi C (strain RKS4594)</name>
    <dbReference type="NCBI Taxonomy" id="476213"/>
    <lineage>
        <taxon>Bacteria</taxon>
        <taxon>Pseudomonadati</taxon>
        <taxon>Pseudomonadota</taxon>
        <taxon>Gammaproteobacteria</taxon>
        <taxon>Enterobacterales</taxon>
        <taxon>Enterobacteriaceae</taxon>
        <taxon>Salmonella</taxon>
    </lineage>
</organism>
<protein>
    <recommendedName>
        <fullName evidence="1">Protein RecA</fullName>
    </recommendedName>
    <alternativeName>
        <fullName evidence="1">Recombinase A</fullName>
    </alternativeName>
</protein>
<comment type="function">
    <text evidence="1">Can catalyze the hydrolysis of ATP in the presence of single-stranded DNA, the ATP-dependent uptake of single-stranded DNA by duplex DNA, and the ATP-dependent hybridization of homologous single-stranded DNAs. It interacts with LexA causing its activation and leading to its autocatalytic cleavage.</text>
</comment>
<comment type="subcellular location">
    <subcellularLocation>
        <location evidence="1">Cytoplasm</location>
    </subcellularLocation>
</comment>
<comment type="similarity">
    <text evidence="1">Belongs to the RecA family.</text>
</comment>
<dbReference type="EMBL" id="CP000857">
    <property type="protein sequence ID" value="ACN46964.1"/>
    <property type="molecule type" value="Genomic_DNA"/>
</dbReference>
<dbReference type="RefSeq" id="WP_000963150.1">
    <property type="nucleotide sequence ID" value="NC_012125.1"/>
</dbReference>
<dbReference type="SMR" id="C0PWM2"/>
<dbReference type="KEGG" id="sei:SPC_2870"/>
<dbReference type="HOGENOM" id="CLU_040469_3_2_6"/>
<dbReference type="Proteomes" id="UP000001599">
    <property type="component" value="Chromosome"/>
</dbReference>
<dbReference type="GO" id="GO:0005829">
    <property type="term" value="C:cytosol"/>
    <property type="evidence" value="ECO:0007669"/>
    <property type="project" value="TreeGrafter"/>
</dbReference>
<dbReference type="GO" id="GO:0005524">
    <property type="term" value="F:ATP binding"/>
    <property type="evidence" value="ECO:0007669"/>
    <property type="project" value="UniProtKB-UniRule"/>
</dbReference>
<dbReference type="GO" id="GO:0016887">
    <property type="term" value="F:ATP hydrolysis activity"/>
    <property type="evidence" value="ECO:0007669"/>
    <property type="project" value="InterPro"/>
</dbReference>
<dbReference type="GO" id="GO:0140664">
    <property type="term" value="F:ATP-dependent DNA damage sensor activity"/>
    <property type="evidence" value="ECO:0007669"/>
    <property type="project" value="InterPro"/>
</dbReference>
<dbReference type="GO" id="GO:0003684">
    <property type="term" value="F:damaged DNA binding"/>
    <property type="evidence" value="ECO:0007669"/>
    <property type="project" value="UniProtKB-UniRule"/>
</dbReference>
<dbReference type="GO" id="GO:0003697">
    <property type="term" value="F:single-stranded DNA binding"/>
    <property type="evidence" value="ECO:0007669"/>
    <property type="project" value="UniProtKB-UniRule"/>
</dbReference>
<dbReference type="GO" id="GO:0006310">
    <property type="term" value="P:DNA recombination"/>
    <property type="evidence" value="ECO:0007669"/>
    <property type="project" value="UniProtKB-UniRule"/>
</dbReference>
<dbReference type="GO" id="GO:0006281">
    <property type="term" value="P:DNA repair"/>
    <property type="evidence" value="ECO:0007669"/>
    <property type="project" value="UniProtKB-UniRule"/>
</dbReference>
<dbReference type="GO" id="GO:0009432">
    <property type="term" value="P:SOS response"/>
    <property type="evidence" value="ECO:0007669"/>
    <property type="project" value="UniProtKB-UniRule"/>
</dbReference>
<dbReference type="CDD" id="cd00983">
    <property type="entry name" value="RecA"/>
    <property type="match status" value="1"/>
</dbReference>
<dbReference type="FunFam" id="3.40.50.300:FF:000087">
    <property type="entry name" value="Recombinase RecA"/>
    <property type="match status" value="1"/>
</dbReference>
<dbReference type="Gene3D" id="3.40.50.300">
    <property type="entry name" value="P-loop containing nucleotide triphosphate hydrolases"/>
    <property type="match status" value="1"/>
</dbReference>
<dbReference type="HAMAP" id="MF_00268">
    <property type="entry name" value="RecA"/>
    <property type="match status" value="1"/>
</dbReference>
<dbReference type="InterPro" id="IPR003593">
    <property type="entry name" value="AAA+_ATPase"/>
</dbReference>
<dbReference type="InterPro" id="IPR013765">
    <property type="entry name" value="DNA_recomb/repair_RecA"/>
</dbReference>
<dbReference type="InterPro" id="IPR020584">
    <property type="entry name" value="DNA_recomb/repair_RecA_CS"/>
</dbReference>
<dbReference type="InterPro" id="IPR027417">
    <property type="entry name" value="P-loop_NTPase"/>
</dbReference>
<dbReference type="InterPro" id="IPR049261">
    <property type="entry name" value="RecA-like_C"/>
</dbReference>
<dbReference type="InterPro" id="IPR049428">
    <property type="entry name" value="RecA-like_N"/>
</dbReference>
<dbReference type="InterPro" id="IPR020588">
    <property type="entry name" value="RecA_ATP-bd"/>
</dbReference>
<dbReference type="InterPro" id="IPR023400">
    <property type="entry name" value="RecA_C_sf"/>
</dbReference>
<dbReference type="InterPro" id="IPR020587">
    <property type="entry name" value="RecA_monomer-monomer_interface"/>
</dbReference>
<dbReference type="NCBIfam" id="TIGR02012">
    <property type="entry name" value="tigrfam_recA"/>
    <property type="match status" value="1"/>
</dbReference>
<dbReference type="PANTHER" id="PTHR45900:SF1">
    <property type="entry name" value="MITOCHONDRIAL DNA REPAIR PROTEIN RECA HOMOLOG-RELATED"/>
    <property type="match status" value="1"/>
</dbReference>
<dbReference type="PANTHER" id="PTHR45900">
    <property type="entry name" value="RECA"/>
    <property type="match status" value="1"/>
</dbReference>
<dbReference type="Pfam" id="PF00154">
    <property type="entry name" value="RecA"/>
    <property type="match status" value="1"/>
</dbReference>
<dbReference type="Pfam" id="PF21096">
    <property type="entry name" value="RecA_C"/>
    <property type="match status" value="1"/>
</dbReference>
<dbReference type="PRINTS" id="PR00142">
    <property type="entry name" value="RECA"/>
</dbReference>
<dbReference type="SMART" id="SM00382">
    <property type="entry name" value="AAA"/>
    <property type="match status" value="1"/>
</dbReference>
<dbReference type="SUPFAM" id="SSF52540">
    <property type="entry name" value="P-loop containing nucleoside triphosphate hydrolases"/>
    <property type="match status" value="1"/>
</dbReference>
<dbReference type="SUPFAM" id="SSF54752">
    <property type="entry name" value="RecA protein, C-terminal domain"/>
    <property type="match status" value="1"/>
</dbReference>
<dbReference type="PROSITE" id="PS00321">
    <property type="entry name" value="RECA_1"/>
    <property type="match status" value="1"/>
</dbReference>
<dbReference type="PROSITE" id="PS50162">
    <property type="entry name" value="RECA_2"/>
    <property type="match status" value="1"/>
</dbReference>
<dbReference type="PROSITE" id="PS50163">
    <property type="entry name" value="RECA_3"/>
    <property type="match status" value="1"/>
</dbReference>
<keyword id="KW-0067">ATP-binding</keyword>
<keyword id="KW-0963">Cytoplasm</keyword>
<keyword id="KW-0227">DNA damage</keyword>
<keyword id="KW-0233">DNA recombination</keyword>
<keyword id="KW-0234">DNA repair</keyword>
<keyword id="KW-0238">DNA-binding</keyword>
<keyword id="KW-0547">Nucleotide-binding</keyword>
<keyword id="KW-0742">SOS response</keyword>
<gene>
    <name evidence="1" type="primary">recA</name>
    <name type="ordered locus">SPC_2870</name>
</gene>
<evidence type="ECO:0000255" key="1">
    <source>
        <dbReference type="HAMAP-Rule" id="MF_00268"/>
    </source>
</evidence>
<feature type="chain" id="PRO_1000193325" description="Protein RecA">
    <location>
        <begin position="1"/>
        <end position="353"/>
    </location>
</feature>
<feature type="binding site" evidence="1">
    <location>
        <begin position="67"/>
        <end position="74"/>
    </location>
    <ligand>
        <name>ATP</name>
        <dbReference type="ChEBI" id="CHEBI:30616"/>
    </ligand>
</feature>
<sequence length="353" mass="37944">MAIDENKQKALAAALGQIEKQFGKGSIMRLGEDRSMDVETISTGSLSLDIALGAGGLPMGRIVEIYGPESSGKTTLTLQVIAAAQREGKTCAFIDAEHALDPVYARKLGVDIDNLLCSQPDTGEQALEICDALARSGAVDVIVVDSVAALTPKAEIEGEIGDSHMGLAARMMSQAMRKLAGNLKQSNTLLIFINQIRMKIGVMFGNPETTTGGNALKFYASVRLDIRRIGAVKEGDNVVGSETRVKVVKNKIAAPFKQAEFQILYGEGINFYGELVDLGVKEKLIEKAGAWYSYNGEKIGQGKANATTWLKENPATAKEIEKRVRELLLSNQNATPDFAVDDSEGVAETNEDF</sequence>
<name>RECA_SALPC</name>
<accession>C0PWM2</accession>
<reference key="1">
    <citation type="journal article" date="2009" name="PLoS ONE">
        <title>Salmonella paratyphi C: genetic divergence from Salmonella choleraesuis and pathogenic convergence with Salmonella typhi.</title>
        <authorList>
            <person name="Liu W.-Q."/>
            <person name="Feng Y."/>
            <person name="Wang Y."/>
            <person name="Zou Q.-H."/>
            <person name="Chen F."/>
            <person name="Guo J.-T."/>
            <person name="Peng Y.-H."/>
            <person name="Jin Y."/>
            <person name="Li Y.-G."/>
            <person name="Hu S.-N."/>
            <person name="Johnston R.N."/>
            <person name="Liu G.-R."/>
            <person name="Liu S.-L."/>
        </authorList>
    </citation>
    <scope>NUCLEOTIDE SEQUENCE [LARGE SCALE GENOMIC DNA]</scope>
    <source>
        <strain>RKS4594</strain>
    </source>
</reference>